<name>CED8_CAEBR</name>
<accession>A8Y2U2</accession>
<reference evidence="4" key="1">
    <citation type="journal article" date="2003" name="PLoS Biol.">
        <title>The genome sequence of Caenorhabditis briggsae: a platform for comparative genomics.</title>
        <authorList>
            <person name="Stein L.D."/>
            <person name="Bao Z."/>
            <person name="Blasiar D."/>
            <person name="Blumenthal T."/>
            <person name="Brent M.R."/>
            <person name="Chen N."/>
            <person name="Chinwalla A."/>
            <person name="Clarke L."/>
            <person name="Clee C."/>
            <person name="Coghlan A."/>
            <person name="Coulson A."/>
            <person name="D'Eustachio P."/>
            <person name="Fitch D.H.A."/>
            <person name="Fulton L.A."/>
            <person name="Fulton R.E."/>
            <person name="Griffiths-Jones S."/>
            <person name="Harris T.W."/>
            <person name="Hillier L.W."/>
            <person name="Kamath R."/>
            <person name="Kuwabara P.E."/>
            <person name="Mardis E.R."/>
            <person name="Marra M.A."/>
            <person name="Miner T.L."/>
            <person name="Minx P."/>
            <person name="Mullikin J.C."/>
            <person name="Plumb R.W."/>
            <person name="Rogers J."/>
            <person name="Schein J.E."/>
            <person name="Sohrmann M."/>
            <person name="Spieth J."/>
            <person name="Stajich J.E."/>
            <person name="Wei C."/>
            <person name="Willey D."/>
            <person name="Wilson R.K."/>
            <person name="Durbin R.M."/>
            <person name="Waterston R.H."/>
        </authorList>
    </citation>
    <scope>NUCLEOTIDE SEQUENCE [LARGE SCALE GENOMIC DNA]</scope>
    <source>
        <strain evidence="4">AF16</strain>
    </source>
</reference>
<gene>
    <name evidence="4" type="primary">ced-8</name>
    <name type="ORF">CBG22761</name>
</gene>
<organism>
    <name type="scientific">Caenorhabditis briggsae</name>
    <dbReference type="NCBI Taxonomy" id="6238"/>
    <lineage>
        <taxon>Eukaryota</taxon>
        <taxon>Metazoa</taxon>
        <taxon>Ecdysozoa</taxon>
        <taxon>Nematoda</taxon>
        <taxon>Chromadorea</taxon>
        <taxon>Rhabditida</taxon>
        <taxon>Rhabditina</taxon>
        <taxon>Rhabditomorpha</taxon>
        <taxon>Rhabditoidea</taxon>
        <taxon>Rhabditidae</taxon>
        <taxon>Peloderinae</taxon>
        <taxon>Caenorhabditis</taxon>
    </lineage>
</organism>
<proteinExistence type="inferred from homology"/>
<evidence type="ECO:0000250" key="1">
    <source>
        <dbReference type="UniProtKB" id="O17386"/>
    </source>
</evidence>
<evidence type="ECO:0000255" key="2"/>
<evidence type="ECO:0000305" key="3"/>
<evidence type="ECO:0000312" key="4">
    <source>
        <dbReference type="EMBL" id="CAP39278.1"/>
    </source>
</evidence>
<feature type="chain" id="PRO_0000379935" description="Cell death abnormality protein 8">
    <location>
        <begin position="1"/>
        <end position="460"/>
    </location>
</feature>
<feature type="topological domain" description="Cytoplasmic" evidence="3">
    <location>
        <begin position="1"/>
        <end position="45"/>
    </location>
</feature>
<feature type="transmembrane region" description="Helical" evidence="2">
    <location>
        <begin position="46"/>
        <end position="66"/>
    </location>
</feature>
<feature type="topological domain" description="Extracellular" evidence="3">
    <location>
        <begin position="67"/>
        <end position="77"/>
    </location>
</feature>
<feature type="transmembrane region" description="Helical" evidence="2">
    <location>
        <begin position="78"/>
        <end position="98"/>
    </location>
</feature>
<feature type="topological domain" description="Cytoplasmic" evidence="3">
    <location>
        <begin position="99"/>
        <end position="123"/>
    </location>
</feature>
<feature type="transmembrane region" description="Helical" evidence="2">
    <location>
        <begin position="124"/>
        <end position="144"/>
    </location>
</feature>
<feature type="topological domain" description="Extracellular" evidence="3">
    <location>
        <begin position="145"/>
        <end position="219"/>
    </location>
</feature>
<feature type="transmembrane region" description="Helical" evidence="2">
    <location>
        <begin position="220"/>
        <end position="240"/>
    </location>
</feature>
<feature type="topological domain" description="Cytoplasmic" evidence="3">
    <location>
        <begin position="241"/>
        <end position="274"/>
    </location>
</feature>
<feature type="transmembrane region" description="Helical" evidence="2">
    <location>
        <begin position="275"/>
        <end position="295"/>
    </location>
</feature>
<feature type="topological domain" description="Extracellular" evidence="3">
    <location>
        <begin position="296"/>
        <end position="320"/>
    </location>
</feature>
<feature type="transmembrane region" description="Helical" evidence="2">
    <location>
        <begin position="321"/>
        <end position="341"/>
    </location>
</feature>
<feature type="topological domain" description="Cytoplasmic" evidence="3">
    <location>
        <begin position="342"/>
        <end position="353"/>
    </location>
</feature>
<feature type="transmembrane region" description="Helical" evidence="2">
    <location>
        <begin position="354"/>
        <end position="374"/>
    </location>
</feature>
<feature type="topological domain" description="Extracellular" evidence="3">
    <location>
        <begin position="375"/>
        <end position="378"/>
    </location>
</feature>
<feature type="transmembrane region" description="Helical" evidence="2">
    <location>
        <begin position="379"/>
        <end position="399"/>
    </location>
</feature>
<feature type="topological domain" description="Cytoplasmic" evidence="3">
    <location>
        <begin position="400"/>
        <end position="460"/>
    </location>
</feature>
<feature type="site" description="Cleavage; by ced-3" evidence="1">
    <location>
        <begin position="21"/>
        <end position="22"/>
    </location>
</feature>
<comment type="function">
    <text evidence="1">Acts downstream of ced-9 and caspase ced-3 to promote phosphatidylserine exposure on apoptotic cell surface, possibly by mediating phospholipid scrambling. Phosphatidylserine is a specific marker only present at the surface of apoptotic cells and acts as a specific signal for engulfment. Regulates apoptosis kinetics during embryonic development. Not required for engulfment of germ cell corpses.</text>
</comment>
<comment type="subcellular location">
    <subcellularLocation>
        <location evidence="1">Cell membrane</location>
        <topology evidence="1">Multi-pass membrane protein</topology>
    </subcellularLocation>
</comment>
<comment type="PTM">
    <text evidence="1">Cleavage by ced-3 activates ced-8 function in promoting phosphatidylserine exposure at the surface of apoptotic cells.</text>
</comment>
<comment type="similarity">
    <text evidence="2">Belongs to the XK family.</text>
</comment>
<dbReference type="EMBL" id="HE601156">
    <property type="protein sequence ID" value="CAP39278.1"/>
    <property type="molecule type" value="Genomic_DNA"/>
</dbReference>
<dbReference type="SMR" id="A8Y2U2"/>
<dbReference type="FunCoup" id="A8Y2U2">
    <property type="interactions" value="714"/>
</dbReference>
<dbReference type="STRING" id="6238.A8Y2U2"/>
<dbReference type="EnsemblMetazoa" id="CBG22761.1">
    <property type="protein sequence ID" value="CBG22761.1"/>
    <property type="gene ID" value="WBGene00041249"/>
</dbReference>
<dbReference type="KEGG" id="cbr:CBG_22761"/>
<dbReference type="CTD" id="8587507"/>
<dbReference type="WormBase" id="CBG22761">
    <property type="protein sequence ID" value="CBP20492"/>
    <property type="gene ID" value="WBGene00041249"/>
    <property type="gene designation" value="Cbr-ced-8"/>
</dbReference>
<dbReference type="eggNOG" id="KOG4790">
    <property type="taxonomic scope" value="Eukaryota"/>
</dbReference>
<dbReference type="HOGENOM" id="CLU_028534_5_0_1"/>
<dbReference type="InParanoid" id="A8Y2U2"/>
<dbReference type="OMA" id="NIWPHEA"/>
<dbReference type="Proteomes" id="UP000008549">
    <property type="component" value="Unassembled WGS sequence"/>
</dbReference>
<dbReference type="GO" id="GO:0005886">
    <property type="term" value="C:plasma membrane"/>
    <property type="evidence" value="ECO:0000250"/>
    <property type="project" value="UniProtKB"/>
</dbReference>
<dbReference type="GO" id="GO:0017128">
    <property type="term" value="F:phospholipid scramblase activity"/>
    <property type="evidence" value="ECO:0007669"/>
    <property type="project" value="EnsemblMetazoa"/>
</dbReference>
<dbReference type="GO" id="GO:1902742">
    <property type="term" value="P:apoptotic process involved in development"/>
    <property type="evidence" value="ECO:0000318"/>
    <property type="project" value="GO_Central"/>
</dbReference>
<dbReference type="GO" id="GO:0009792">
    <property type="term" value="P:embryo development ending in birth or egg hatching"/>
    <property type="evidence" value="ECO:0000250"/>
    <property type="project" value="UniProtKB"/>
</dbReference>
<dbReference type="GO" id="GO:0043652">
    <property type="term" value="P:engulfment of apoptotic cell"/>
    <property type="evidence" value="ECO:0000318"/>
    <property type="project" value="GO_Central"/>
</dbReference>
<dbReference type="GO" id="GO:0097194">
    <property type="term" value="P:execution phase of apoptosis"/>
    <property type="evidence" value="ECO:0000250"/>
    <property type="project" value="UniProtKB"/>
</dbReference>
<dbReference type="GO" id="GO:0070782">
    <property type="term" value="P:phosphatidylserine exposure on apoptotic cell surface"/>
    <property type="evidence" value="ECO:0000318"/>
    <property type="project" value="GO_Central"/>
</dbReference>
<dbReference type="GO" id="GO:0012501">
    <property type="term" value="P:programmed cell death"/>
    <property type="evidence" value="ECO:0000250"/>
    <property type="project" value="UniProtKB"/>
</dbReference>
<dbReference type="InterPro" id="IPR018629">
    <property type="entry name" value="XK-rel"/>
</dbReference>
<dbReference type="InterPro" id="IPR050895">
    <property type="entry name" value="XK-related_scramblase"/>
</dbReference>
<dbReference type="PANTHER" id="PTHR16024">
    <property type="entry name" value="XK-RELATED PROTEIN"/>
    <property type="match status" value="1"/>
</dbReference>
<dbReference type="PANTHER" id="PTHR16024:SF6">
    <property type="entry name" value="XK-RELATED PROTEIN"/>
    <property type="match status" value="1"/>
</dbReference>
<dbReference type="Pfam" id="PF09815">
    <property type="entry name" value="XK-related"/>
    <property type="match status" value="1"/>
</dbReference>
<protein>
    <recommendedName>
        <fullName evidence="1">Cell death abnormality protein 8</fullName>
    </recommendedName>
</protein>
<sequence length="460" mass="53816">MYLKKHESKLLLIPKNEDKEDAGIIAVLTDRVPSVLIVRWFDLFCFGFAMCSYVLDFFSDIGIAIFHFWAGRHLSGALVLTFALIPSVIINIISMVWMLDDEMHWKRRAHPRRTGTFELNQKRFISLGKMITLCIFQMGPLFWYYKALYYGWMFTKNKKDDTDKEKRKFFMKMVEAERDATLLRFFEAFLESAPQLIIQGSIAANYFQNYYISGKYPYWLYFQAASLTLSIISISWSVVVQNRSLRMTRDDKVNIWPHEAVLQFCWRFLTILARIITLVAFVLLFGIYVVFLIFGHLIVTLVHVIFLQALHIEACTHIEKLLLLINAMIHLFTPFNMAEGNTRYRYLVAYTVEFIEMMIIFLLLPTPLDAFPLIEKIRIGVPATFFIGIFIMLIYYKFFHPNRRQDLEAPNVERNEKLVVSELNGIPSAAIEKAEHIEEIEEHSVPTTSESLLEEDECHN</sequence>
<keyword id="KW-0053">Apoptosis</keyword>
<keyword id="KW-1003">Cell membrane</keyword>
<keyword id="KW-0472">Membrane</keyword>
<keyword id="KW-1185">Reference proteome</keyword>
<keyword id="KW-0812">Transmembrane</keyword>
<keyword id="KW-1133">Transmembrane helix</keyword>